<protein>
    <recommendedName>
        <fullName evidence="1">Hydroxyethylthiazole kinase</fullName>
        <ecNumber evidence="1">2.7.1.50</ecNumber>
    </recommendedName>
    <alternativeName>
        <fullName evidence="1">4-methyl-5-beta-hydroxyethylthiazole kinase</fullName>
        <shortName evidence="1">TH kinase</shortName>
        <shortName evidence="1">Thz kinase</shortName>
    </alternativeName>
</protein>
<sequence length="267" mass="27024">MPQALPATIVATHLERIRRSVPLTHVITNDVVTGFTANVLLALGAAPAMITAPEEAGSFAAIASVLSVNVGTLTSAQAATIRIAVQSANQAGTPWVLDPVAAGVLPYRTELCRELLQQHPAAIRGNASEIMALAGQAAAGKGVDSANQSDQAIEAAQVLAKSSGAIVAVTGEIDYITDGERVVSIKAGDPLMTRVTGTGCALSSVVAAFIAGCEEKDRLDAVASACAVMAIAGQRAAAKAKGPGSFVPAFLDNLYLLDAVTIAEALA</sequence>
<keyword id="KW-0067">ATP-binding</keyword>
<keyword id="KW-0418">Kinase</keyword>
<keyword id="KW-0460">Magnesium</keyword>
<keyword id="KW-0479">Metal-binding</keyword>
<keyword id="KW-0547">Nucleotide-binding</keyword>
<keyword id="KW-1185">Reference proteome</keyword>
<keyword id="KW-0784">Thiamine biosynthesis</keyword>
<keyword id="KW-0808">Transferase</keyword>
<name>THIM_TOLAT</name>
<evidence type="ECO:0000255" key="1">
    <source>
        <dbReference type="HAMAP-Rule" id="MF_00228"/>
    </source>
</evidence>
<gene>
    <name evidence="1" type="primary">thiM</name>
    <name type="ordered locus">Tola_0219</name>
</gene>
<organism>
    <name type="scientific">Tolumonas auensis (strain DSM 9187 / NBRC 110442 / TA 4)</name>
    <dbReference type="NCBI Taxonomy" id="595494"/>
    <lineage>
        <taxon>Bacteria</taxon>
        <taxon>Pseudomonadati</taxon>
        <taxon>Pseudomonadota</taxon>
        <taxon>Gammaproteobacteria</taxon>
        <taxon>Aeromonadales</taxon>
        <taxon>Aeromonadaceae</taxon>
        <taxon>Tolumonas</taxon>
    </lineage>
</organism>
<proteinExistence type="inferred from homology"/>
<dbReference type="EC" id="2.7.1.50" evidence="1"/>
<dbReference type="EMBL" id="CP001616">
    <property type="protein sequence ID" value="ACQ91849.1"/>
    <property type="molecule type" value="Genomic_DNA"/>
</dbReference>
<dbReference type="RefSeq" id="WP_012728448.1">
    <property type="nucleotide sequence ID" value="NC_012691.1"/>
</dbReference>
<dbReference type="SMR" id="C4L8H9"/>
<dbReference type="STRING" id="595494.Tola_0219"/>
<dbReference type="KEGG" id="tau:Tola_0219"/>
<dbReference type="eggNOG" id="COG2145">
    <property type="taxonomic scope" value="Bacteria"/>
</dbReference>
<dbReference type="HOGENOM" id="CLU_019943_0_1_6"/>
<dbReference type="OrthoDB" id="8909021at2"/>
<dbReference type="UniPathway" id="UPA00060">
    <property type="reaction ID" value="UER00139"/>
</dbReference>
<dbReference type="Proteomes" id="UP000009073">
    <property type="component" value="Chromosome"/>
</dbReference>
<dbReference type="GO" id="GO:0005524">
    <property type="term" value="F:ATP binding"/>
    <property type="evidence" value="ECO:0007669"/>
    <property type="project" value="UniProtKB-UniRule"/>
</dbReference>
<dbReference type="GO" id="GO:0004417">
    <property type="term" value="F:hydroxyethylthiazole kinase activity"/>
    <property type="evidence" value="ECO:0007669"/>
    <property type="project" value="UniProtKB-UniRule"/>
</dbReference>
<dbReference type="GO" id="GO:0000287">
    <property type="term" value="F:magnesium ion binding"/>
    <property type="evidence" value="ECO:0007669"/>
    <property type="project" value="UniProtKB-UniRule"/>
</dbReference>
<dbReference type="GO" id="GO:0009228">
    <property type="term" value="P:thiamine biosynthetic process"/>
    <property type="evidence" value="ECO:0007669"/>
    <property type="project" value="UniProtKB-KW"/>
</dbReference>
<dbReference type="GO" id="GO:0009229">
    <property type="term" value="P:thiamine diphosphate biosynthetic process"/>
    <property type="evidence" value="ECO:0007669"/>
    <property type="project" value="UniProtKB-UniRule"/>
</dbReference>
<dbReference type="CDD" id="cd01170">
    <property type="entry name" value="THZ_kinase"/>
    <property type="match status" value="1"/>
</dbReference>
<dbReference type="Gene3D" id="3.40.1190.20">
    <property type="match status" value="1"/>
</dbReference>
<dbReference type="HAMAP" id="MF_00228">
    <property type="entry name" value="Thz_kinase"/>
    <property type="match status" value="1"/>
</dbReference>
<dbReference type="InterPro" id="IPR000417">
    <property type="entry name" value="Hyethyz_kinase"/>
</dbReference>
<dbReference type="InterPro" id="IPR029056">
    <property type="entry name" value="Ribokinase-like"/>
</dbReference>
<dbReference type="NCBIfam" id="NF006830">
    <property type="entry name" value="PRK09355.1"/>
    <property type="match status" value="1"/>
</dbReference>
<dbReference type="NCBIfam" id="TIGR00694">
    <property type="entry name" value="thiM"/>
    <property type="match status" value="1"/>
</dbReference>
<dbReference type="Pfam" id="PF02110">
    <property type="entry name" value="HK"/>
    <property type="match status" value="1"/>
</dbReference>
<dbReference type="PIRSF" id="PIRSF000513">
    <property type="entry name" value="Thz_kinase"/>
    <property type="match status" value="1"/>
</dbReference>
<dbReference type="PRINTS" id="PR01099">
    <property type="entry name" value="HYETHTZKNASE"/>
</dbReference>
<dbReference type="SUPFAM" id="SSF53613">
    <property type="entry name" value="Ribokinase-like"/>
    <property type="match status" value="1"/>
</dbReference>
<accession>C4L8H9</accession>
<feature type="chain" id="PRO_0000383909" description="Hydroxyethylthiazole kinase">
    <location>
        <begin position="1"/>
        <end position="267"/>
    </location>
</feature>
<feature type="binding site" evidence="1">
    <location>
        <position position="49"/>
    </location>
    <ligand>
        <name>substrate</name>
    </ligand>
</feature>
<feature type="binding site" evidence="1">
    <location>
        <position position="124"/>
    </location>
    <ligand>
        <name>ATP</name>
        <dbReference type="ChEBI" id="CHEBI:30616"/>
    </ligand>
</feature>
<feature type="binding site" evidence="1">
    <location>
        <position position="170"/>
    </location>
    <ligand>
        <name>ATP</name>
        <dbReference type="ChEBI" id="CHEBI:30616"/>
    </ligand>
</feature>
<feature type="binding site" evidence="1">
    <location>
        <position position="197"/>
    </location>
    <ligand>
        <name>substrate</name>
    </ligand>
</feature>
<comment type="function">
    <text evidence="1">Catalyzes the phosphorylation of the hydroxyl group of 4-methyl-5-beta-hydroxyethylthiazole (THZ).</text>
</comment>
<comment type="catalytic activity">
    <reaction evidence="1">
        <text>5-(2-hydroxyethyl)-4-methylthiazole + ATP = 4-methyl-5-(2-phosphooxyethyl)-thiazole + ADP + H(+)</text>
        <dbReference type="Rhea" id="RHEA:24212"/>
        <dbReference type="ChEBI" id="CHEBI:15378"/>
        <dbReference type="ChEBI" id="CHEBI:17957"/>
        <dbReference type="ChEBI" id="CHEBI:30616"/>
        <dbReference type="ChEBI" id="CHEBI:58296"/>
        <dbReference type="ChEBI" id="CHEBI:456216"/>
        <dbReference type="EC" id="2.7.1.50"/>
    </reaction>
</comment>
<comment type="cofactor">
    <cofactor evidence="1">
        <name>Mg(2+)</name>
        <dbReference type="ChEBI" id="CHEBI:18420"/>
    </cofactor>
</comment>
<comment type="pathway">
    <text evidence="1">Cofactor biosynthesis; thiamine diphosphate biosynthesis; 4-methyl-5-(2-phosphoethyl)-thiazole from 5-(2-hydroxyethyl)-4-methylthiazole: step 1/1.</text>
</comment>
<comment type="similarity">
    <text evidence="1">Belongs to the Thz kinase family.</text>
</comment>
<reference key="1">
    <citation type="submission" date="2009-05" db="EMBL/GenBank/DDBJ databases">
        <title>Complete sequence of Tolumonas auensis DSM 9187.</title>
        <authorList>
            <consortium name="US DOE Joint Genome Institute"/>
            <person name="Lucas S."/>
            <person name="Copeland A."/>
            <person name="Lapidus A."/>
            <person name="Glavina del Rio T."/>
            <person name="Tice H."/>
            <person name="Bruce D."/>
            <person name="Goodwin L."/>
            <person name="Pitluck S."/>
            <person name="Chertkov O."/>
            <person name="Brettin T."/>
            <person name="Detter J.C."/>
            <person name="Han C."/>
            <person name="Larimer F."/>
            <person name="Land M."/>
            <person name="Hauser L."/>
            <person name="Kyrpides N."/>
            <person name="Mikhailova N."/>
            <person name="Spring S."/>
            <person name="Beller H."/>
        </authorList>
    </citation>
    <scope>NUCLEOTIDE SEQUENCE [LARGE SCALE GENOMIC DNA]</scope>
    <source>
        <strain>DSM 9187 / NBRC 110442 / TA 4</strain>
    </source>
</reference>